<keyword id="KW-0119">Carbohydrate metabolism</keyword>
<keyword id="KW-0294">Fucose metabolism</keyword>
<keyword id="KW-0325">Glycoprotein</keyword>
<keyword id="KW-0328">Glycosyltransferase</keyword>
<keyword id="KW-0472">Membrane</keyword>
<keyword id="KW-1185">Reference proteome</keyword>
<keyword id="KW-0735">Signal-anchor</keyword>
<keyword id="KW-0808">Transferase</keyword>
<keyword id="KW-0812">Transmembrane</keyword>
<keyword id="KW-1133">Transmembrane helix</keyword>
<gene>
    <name evidence="5" type="primary">OFUT9</name>
    <name evidence="6" type="ordered locus">At1g35510</name>
    <name evidence="7" type="ORF">F15O4.45</name>
</gene>
<sequence>MHGLSRLGNGSSNGRINIPSPSPPSSPRIRHTRGKSLAGGVYKQGLGERLVFLLFSIVFRRKGVLLLAPLLYIAGMLLFMGSFGFTVLDLGHGVEIVYRRGSPGSVYRSPKVFKRLWPVMEADVNGSSHNVLMEAWKPRVKSVWKPCISTNVSAAGSNSNGYFIIEANGGLNQQRLSICDAVAVAGLLNATLVIPIFHLNSVWRDSSKFGDIFDEDFFIYALSKNVNVVKELPKDVLERYNYNISSIVNLRLKAWSSPAYYLQKVLPQLLRLGAVRVAPFSNRLAHAVPAHIQGLRCLANFEALRFAEPIRLLAEKMVDRMVTKSVESGGKYVSVHLRFEMDMVAFSCCEYDFGQAEKLEMDMARERGWKGKFRRRGRVIRPGANRIDGKCPLTPLEVGMMLRGMGFNNSTLVYVAAGNIYKADKYMAPLRQMFPLLQTKDTLATPEELAPFKGHSSRLAALDYTVCLHSEVFVSTQGGNFPHFLIGHRRYLYKGHAETIKPDKRKLVQLLDKPSIRWDYFKKQMQDMLRHNDAKGVELRKPAASLYTFPMPDCMCKEPDPEPETDPA</sequence>
<accession>Q8H1E6</accession>
<accession>Q949Q9</accession>
<accession>Q9LQE0</accession>
<reference key="1">
    <citation type="submission" date="2017-04" db="EMBL/GenBank/DDBJ databases">
        <title>Arabidopsis glycosyltransferases: an update.</title>
        <authorList>
            <person name="Zeng W."/>
            <person name="Gluza P."/>
            <person name="Heazlewood J."/>
        </authorList>
    </citation>
    <scope>NUCLEOTIDE SEQUENCE [MRNA]</scope>
    <source>
        <strain>cv. Columbia</strain>
    </source>
</reference>
<reference key="2">
    <citation type="journal article" date="2000" name="Nature">
        <title>Sequence and analysis of chromosome 1 of the plant Arabidopsis thaliana.</title>
        <authorList>
            <person name="Theologis A."/>
            <person name="Ecker J.R."/>
            <person name="Palm C.J."/>
            <person name="Federspiel N.A."/>
            <person name="Kaul S."/>
            <person name="White O."/>
            <person name="Alonso J."/>
            <person name="Altafi H."/>
            <person name="Araujo R."/>
            <person name="Bowman C.L."/>
            <person name="Brooks S.Y."/>
            <person name="Buehler E."/>
            <person name="Chan A."/>
            <person name="Chao Q."/>
            <person name="Chen H."/>
            <person name="Cheuk R.F."/>
            <person name="Chin C.W."/>
            <person name="Chung M.K."/>
            <person name="Conn L."/>
            <person name="Conway A.B."/>
            <person name="Conway A.R."/>
            <person name="Creasy T.H."/>
            <person name="Dewar K."/>
            <person name="Dunn P."/>
            <person name="Etgu P."/>
            <person name="Feldblyum T.V."/>
            <person name="Feng J.-D."/>
            <person name="Fong B."/>
            <person name="Fujii C.Y."/>
            <person name="Gill J.E."/>
            <person name="Goldsmith A.D."/>
            <person name="Haas B."/>
            <person name="Hansen N.F."/>
            <person name="Hughes B."/>
            <person name="Huizar L."/>
            <person name="Hunter J.L."/>
            <person name="Jenkins J."/>
            <person name="Johnson-Hopson C."/>
            <person name="Khan S."/>
            <person name="Khaykin E."/>
            <person name="Kim C.J."/>
            <person name="Koo H.L."/>
            <person name="Kremenetskaia I."/>
            <person name="Kurtz D.B."/>
            <person name="Kwan A."/>
            <person name="Lam B."/>
            <person name="Langin-Hooper S."/>
            <person name="Lee A."/>
            <person name="Lee J.M."/>
            <person name="Lenz C.A."/>
            <person name="Li J.H."/>
            <person name="Li Y.-P."/>
            <person name="Lin X."/>
            <person name="Liu S.X."/>
            <person name="Liu Z.A."/>
            <person name="Luros J.S."/>
            <person name="Maiti R."/>
            <person name="Marziali A."/>
            <person name="Militscher J."/>
            <person name="Miranda M."/>
            <person name="Nguyen M."/>
            <person name="Nierman W.C."/>
            <person name="Osborne B.I."/>
            <person name="Pai G."/>
            <person name="Peterson J."/>
            <person name="Pham P.K."/>
            <person name="Rizzo M."/>
            <person name="Rooney T."/>
            <person name="Rowley D."/>
            <person name="Sakano H."/>
            <person name="Salzberg S.L."/>
            <person name="Schwartz J.R."/>
            <person name="Shinn P."/>
            <person name="Southwick A.M."/>
            <person name="Sun H."/>
            <person name="Tallon L.J."/>
            <person name="Tambunga G."/>
            <person name="Toriumi M.J."/>
            <person name="Town C.D."/>
            <person name="Utterback T."/>
            <person name="Van Aken S."/>
            <person name="Vaysberg M."/>
            <person name="Vysotskaia V.S."/>
            <person name="Walker M."/>
            <person name="Wu D."/>
            <person name="Yu G."/>
            <person name="Fraser C.M."/>
            <person name="Venter J.C."/>
            <person name="Davis R.W."/>
        </authorList>
    </citation>
    <scope>NUCLEOTIDE SEQUENCE [LARGE SCALE GENOMIC DNA]</scope>
    <source>
        <strain>cv. Columbia</strain>
    </source>
</reference>
<reference key="3">
    <citation type="journal article" date="2017" name="Plant J.">
        <title>Araport11: a complete reannotation of the Arabidopsis thaliana reference genome.</title>
        <authorList>
            <person name="Cheng C.Y."/>
            <person name="Krishnakumar V."/>
            <person name="Chan A.P."/>
            <person name="Thibaud-Nissen F."/>
            <person name="Schobel S."/>
            <person name="Town C.D."/>
        </authorList>
    </citation>
    <scope>GENOME REANNOTATION</scope>
    <source>
        <strain>cv. Columbia</strain>
    </source>
</reference>
<reference key="4">
    <citation type="journal article" date="2003" name="Science">
        <title>Empirical analysis of transcriptional activity in the Arabidopsis genome.</title>
        <authorList>
            <person name="Yamada K."/>
            <person name="Lim J."/>
            <person name="Dale J.M."/>
            <person name="Chen H."/>
            <person name="Shinn P."/>
            <person name="Palm C.J."/>
            <person name="Southwick A.M."/>
            <person name="Wu H.C."/>
            <person name="Kim C.J."/>
            <person name="Nguyen M."/>
            <person name="Pham P.K."/>
            <person name="Cheuk R.F."/>
            <person name="Karlin-Newmann G."/>
            <person name="Liu S.X."/>
            <person name="Lam B."/>
            <person name="Sakano H."/>
            <person name="Wu T."/>
            <person name="Yu G."/>
            <person name="Miranda M."/>
            <person name="Quach H.L."/>
            <person name="Tripp M."/>
            <person name="Chang C.H."/>
            <person name="Lee J.M."/>
            <person name="Toriumi M.J."/>
            <person name="Chan M.M."/>
            <person name="Tang C.C."/>
            <person name="Onodera C.S."/>
            <person name="Deng J.M."/>
            <person name="Akiyama K."/>
            <person name="Ansari Y."/>
            <person name="Arakawa T."/>
            <person name="Banh J."/>
            <person name="Banno F."/>
            <person name="Bowser L."/>
            <person name="Brooks S.Y."/>
            <person name="Carninci P."/>
            <person name="Chao Q."/>
            <person name="Choy N."/>
            <person name="Enju A."/>
            <person name="Goldsmith A.D."/>
            <person name="Gurjal M."/>
            <person name="Hansen N.F."/>
            <person name="Hayashizaki Y."/>
            <person name="Johnson-Hopson C."/>
            <person name="Hsuan V.W."/>
            <person name="Iida K."/>
            <person name="Karnes M."/>
            <person name="Khan S."/>
            <person name="Koesema E."/>
            <person name="Ishida J."/>
            <person name="Jiang P.X."/>
            <person name="Jones T."/>
            <person name="Kawai J."/>
            <person name="Kamiya A."/>
            <person name="Meyers C."/>
            <person name="Nakajima M."/>
            <person name="Narusaka M."/>
            <person name="Seki M."/>
            <person name="Sakurai T."/>
            <person name="Satou M."/>
            <person name="Tamse R."/>
            <person name="Vaysberg M."/>
            <person name="Wallender E.K."/>
            <person name="Wong C."/>
            <person name="Yamamura Y."/>
            <person name="Yuan S."/>
            <person name="Shinozaki K."/>
            <person name="Davis R.W."/>
            <person name="Theologis A."/>
            <person name="Ecker J.R."/>
        </authorList>
    </citation>
    <scope>NUCLEOTIDE SEQUENCE [LARGE SCALE MRNA]</scope>
    <source>
        <strain>cv. Columbia</strain>
    </source>
</reference>
<reference key="5">
    <citation type="journal article" date="2012" name="Front. Plant Sci.">
        <title>Plant glycosyltransferases beyond CAZy: a perspective on DUF families.</title>
        <authorList>
            <person name="Hansen S.F."/>
            <person name="Harholt J."/>
            <person name="Oikawa A."/>
            <person name="Scheller H.V."/>
        </authorList>
    </citation>
    <scope>GENE FAMILY</scope>
    <scope>REVIEW</scope>
</reference>
<reference key="6">
    <citation type="journal article" date="2012" name="PLoS ONE">
        <title>The FRIABLE1 gene product affects cell adhesion in Arabidopsis.</title>
        <authorList>
            <person name="Neumetzler L."/>
            <person name="Humphrey T."/>
            <person name="Lumba S."/>
            <person name="Snyder S."/>
            <person name="Yeats T.H."/>
            <person name="Usadel B."/>
            <person name="Vasilevski A."/>
            <person name="Patel J."/>
            <person name="Rose J.K."/>
            <person name="Persson S."/>
            <person name="Bonetta D."/>
        </authorList>
    </citation>
    <scope>GENE FAMILY</scope>
</reference>
<reference key="7">
    <citation type="journal article" date="2012" name="PLoS ONE">
        <title>Identification of putative rhamnogalacturonan-II specific glycosyltransferases in Arabidopsis using a combination of bioinformatics approaches.</title>
        <authorList>
            <person name="Voxeur A."/>
            <person name="Andre A."/>
            <person name="Breton C."/>
            <person name="Lerouge P."/>
        </authorList>
    </citation>
    <scope>GENE FAMILY</scope>
</reference>
<reference key="8">
    <citation type="journal article" date="2013" name="Plant J.">
        <title>Identification of an additional protein involved in mannan biosynthesis.</title>
        <authorList>
            <person name="Wang Y."/>
            <person name="Mortimer J.C."/>
            <person name="Davis J."/>
            <person name="Dupree P."/>
            <person name="Keegstra K."/>
        </authorList>
    </citation>
    <scope>GENE FAMILY</scope>
</reference>
<reference key="9">
    <citation type="journal article" date="2014" name="Plant J.">
        <title>The plant glycosyltransferase clone collection for functional genomics.</title>
        <authorList>
            <person name="Lao J."/>
            <person name="Oikawa A."/>
            <person name="Bromley J.R."/>
            <person name="McInerney P."/>
            <person name="Suttangkakul A."/>
            <person name="Smith-Moritz A.M."/>
            <person name="Plahar H."/>
            <person name="Chiu T.-Y."/>
            <person name="Gonzalez Fernandez-Nino S.M.G."/>
            <person name="Ebert B."/>
            <person name="Yang F."/>
            <person name="Christiansen K.M."/>
            <person name="Hansen S.F."/>
            <person name="Stonebloom S."/>
            <person name="Adams P.D."/>
            <person name="Ronald P.C."/>
            <person name="Hillson N.J."/>
            <person name="Hadi M.Z."/>
            <person name="Vega-Sanchez M.E."/>
            <person name="Loque D."/>
            <person name="Scheller H.V."/>
            <person name="Heazlewood J.L."/>
        </authorList>
    </citation>
    <scope>WEB RESOURCE</scope>
</reference>
<organism>
    <name type="scientific">Arabidopsis thaliana</name>
    <name type="common">Mouse-ear cress</name>
    <dbReference type="NCBI Taxonomy" id="3702"/>
    <lineage>
        <taxon>Eukaryota</taxon>
        <taxon>Viridiplantae</taxon>
        <taxon>Streptophyta</taxon>
        <taxon>Embryophyta</taxon>
        <taxon>Tracheophyta</taxon>
        <taxon>Spermatophyta</taxon>
        <taxon>Magnoliopsida</taxon>
        <taxon>eudicotyledons</taxon>
        <taxon>Gunneridae</taxon>
        <taxon>Pentapetalae</taxon>
        <taxon>rosids</taxon>
        <taxon>malvids</taxon>
        <taxon>Brassicales</taxon>
        <taxon>Brassicaceae</taxon>
        <taxon>Camelineae</taxon>
        <taxon>Arabidopsis</taxon>
    </lineage>
</organism>
<feature type="chain" id="PRO_0000442072" description="O-fucosyltransferase 9">
    <location>
        <begin position="1"/>
        <end position="568"/>
    </location>
</feature>
<feature type="transmembrane region" description="Helical; Signal-anchor for type II membrane protein" evidence="5">
    <location>
        <begin position="65"/>
        <end position="85"/>
    </location>
</feature>
<feature type="region of interest" description="Disordered" evidence="4">
    <location>
        <begin position="1"/>
        <end position="33"/>
    </location>
</feature>
<feature type="compositionally biased region" description="Low complexity" evidence="4">
    <location>
        <begin position="1"/>
        <end position="19"/>
    </location>
</feature>
<feature type="binding site" evidence="1">
    <location>
        <begin position="336"/>
        <end position="338"/>
    </location>
    <ligand>
        <name>substrate</name>
    </ligand>
</feature>
<feature type="glycosylation site" description="N-linked (GlcNAc...) asparagine" evidence="3">
    <location>
        <position position="125"/>
    </location>
</feature>
<feature type="glycosylation site" description="N-linked (GlcNAc...) asparagine" evidence="3">
    <location>
        <position position="151"/>
    </location>
</feature>
<feature type="glycosylation site" description="N-linked (GlcNAc...) asparagine" evidence="3">
    <location>
        <position position="189"/>
    </location>
</feature>
<feature type="glycosylation site" description="N-linked (GlcNAc...) asparagine" evidence="3">
    <location>
        <position position="243"/>
    </location>
</feature>
<feature type="glycosylation site" description="N-linked (GlcNAc...) asparagine" evidence="3">
    <location>
        <position position="408"/>
    </location>
</feature>
<feature type="glycosylation site" description="N-linked (GlcNAc...) asparagine" evidence="3">
    <location>
        <position position="409"/>
    </location>
</feature>
<feature type="sequence conflict" description="In Ref. 4; AAK93632." evidence="5" ref="4">
    <original>P</original>
    <variation>L</variation>
    <location>
        <position position="21"/>
    </location>
</feature>
<name>OFUT9_ARATH</name>
<dbReference type="EC" id="2.4.1.-" evidence="5"/>
<dbReference type="EMBL" id="KY906094">
    <property type="protein sequence ID" value="ARJ31458.1"/>
    <property type="molecule type" value="mRNA"/>
</dbReference>
<dbReference type="EMBL" id="AC007887">
    <property type="protein sequence ID" value="AAF79365.1"/>
    <property type="status" value="ALT_SEQ"/>
    <property type="molecule type" value="Genomic_DNA"/>
</dbReference>
<dbReference type="EMBL" id="CP002684">
    <property type="protein sequence ID" value="AEE31802.1"/>
    <property type="molecule type" value="Genomic_DNA"/>
</dbReference>
<dbReference type="EMBL" id="AY050955">
    <property type="protein sequence ID" value="AAK93632.1"/>
    <property type="molecule type" value="mRNA"/>
</dbReference>
<dbReference type="EMBL" id="AY150442">
    <property type="protein sequence ID" value="AAN12984.1"/>
    <property type="molecule type" value="mRNA"/>
</dbReference>
<dbReference type="PIR" id="C86476">
    <property type="entry name" value="C86476"/>
</dbReference>
<dbReference type="RefSeq" id="NP_564461.1">
    <property type="nucleotide sequence ID" value="NM_103245.3"/>
</dbReference>
<dbReference type="FunCoup" id="Q8H1E6">
    <property type="interactions" value="1526"/>
</dbReference>
<dbReference type="GlyCosmos" id="Q8H1E6">
    <property type="glycosylation" value="6 sites, No reported glycans"/>
</dbReference>
<dbReference type="GlyGen" id="Q8H1E6">
    <property type="glycosylation" value="6 sites"/>
</dbReference>
<dbReference type="iPTMnet" id="Q8H1E6"/>
<dbReference type="PaxDb" id="3702-AT1G35510.1"/>
<dbReference type="ProteomicsDB" id="238939"/>
<dbReference type="EnsemblPlants" id="AT1G35510.1">
    <property type="protein sequence ID" value="AT1G35510.1"/>
    <property type="gene ID" value="AT1G35510"/>
</dbReference>
<dbReference type="GeneID" id="840444"/>
<dbReference type="Gramene" id="AT1G35510.1">
    <property type="protein sequence ID" value="AT1G35510.1"/>
    <property type="gene ID" value="AT1G35510"/>
</dbReference>
<dbReference type="KEGG" id="ath:AT1G35510"/>
<dbReference type="Araport" id="AT1G35510"/>
<dbReference type="TAIR" id="AT1G35510"/>
<dbReference type="eggNOG" id="ENOG502QS6G">
    <property type="taxonomic scope" value="Eukaryota"/>
</dbReference>
<dbReference type="HOGENOM" id="CLU_018420_8_1_1"/>
<dbReference type="InParanoid" id="Q8H1E6"/>
<dbReference type="OMA" id="DEDFFIH"/>
<dbReference type="OrthoDB" id="20368at2759"/>
<dbReference type="PhylomeDB" id="Q8H1E6"/>
<dbReference type="PRO" id="PR:Q8H1E6"/>
<dbReference type="Proteomes" id="UP000006548">
    <property type="component" value="Chromosome 1"/>
</dbReference>
<dbReference type="ExpressionAtlas" id="Q8H1E6">
    <property type="expression patterns" value="baseline and differential"/>
</dbReference>
<dbReference type="GO" id="GO:0016020">
    <property type="term" value="C:membrane"/>
    <property type="evidence" value="ECO:0007669"/>
    <property type="project" value="UniProtKB-SubCell"/>
</dbReference>
<dbReference type="GO" id="GO:0016757">
    <property type="term" value="F:glycosyltransferase activity"/>
    <property type="evidence" value="ECO:0007669"/>
    <property type="project" value="UniProtKB-KW"/>
</dbReference>
<dbReference type="GO" id="GO:0006004">
    <property type="term" value="P:fucose metabolic process"/>
    <property type="evidence" value="ECO:0007669"/>
    <property type="project" value="UniProtKB-KW"/>
</dbReference>
<dbReference type="CDD" id="cd11299">
    <property type="entry name" value="O-FucT_plant"/>
    <property type="match status" value="1"/>
</dbReference>
<dbReference type="InterPro" id="IPR024709">
    <property type="entry name" value="FucosylTrfase_pln"/>
</dbReference>
<dbReference type="InterPro" id="IPR019378">
    <property type="entry name" value="GDP-Fuc_O-FucTrfase"/>
</dbReference>
<dbReference type="PANTHER" id="PTHR31288:SF22">
    <property type="entry name" value="O-FUCOSYLTRANSFERASE 9"/>
    <property type="match status" value="1"/>
</dbReference>
<dbReference type="PANTHER" id="PTHR31288">
    <property type="entry name" value="O-FUCOSYLTRANSFERASE FAMILY PROTEIN"/>
    <property type="match status" value="1"/>
</dbReference>
<dbReference type="Pfam" id="PF10250">
    <property type="entry name" value="O-FucT"/>
    <property type="match status" value="1"/>
</dbReference>
<dbReference type="PIRSF" id="PIRSF009360">
    <property type="entry name" value="UCP009360"/>
    <property type="match status" value="1"/>
</dbReference>
<proteinExistence type="evidence at transcript level"/>
<evidence type="ECO:0000250" key="1">
    <source>
        <dbReference type="UniProtKB" id="Q9H488"/>
    </source>
</evidence>
<evidence type="ECO:0000255" key="2"/>
<evidence type="ECO:0000255" key="3">
    <source>
        <dbReference type="PROSITE-ProRule" id="PRU00498"/>
    </source>
</evidence>
<evidence type="ECO:0000256" key="4">
    <source>
        <dbReference type="SAM" id="MobiDB-lite"/>
    </source>
</evidence>
<evidence type="ECO:0000305" key="5"/>
<evidence type="ECO:0000312" key="6">
    <source>
        <dbReference type="Araport" id="AT1G35510"/>
    </source>
</evidence>
<evidence type="ECO:0000312" key="7">
    <source>
        <dbReference type="EMBL" id="AAF79365.1"/>
    </source>
</evidence>
<evidence type="ECO:0000312" key="8">
    <source>
        <dbReference type="EMBL" id="ARJ31458.1"/>
    </source>
</evidence>
<comment type="pathway">
    <text evidence="5">Glycan metabolism.</text>
</comment>
<comment type="subcellular location">
    <subcellularLocation>
        <location evidence="2">Membrane</location>
        <topology evidence="5">Single-pass type II membrane protein</topology>
    </subcellularLocation>
</comment>
<comment type="similarity">
    <text evidence="5">Belongs to the glycosyltransferase GT106 family.</text>
</comment>
<comment type="sequence caution" evidence="5">
    <conflict type="erroneous gene model prediction">
        <sequence resource="EMBL-CDS" id="AAF79365"/>
    </conflict>
</comment>
<protein>
    <recommendedName>
        <fullName evidence="5">O-fucosyltransferase 9</fullName>
        <shortName evidence="5">O-FucT-9</shortName>
        <ecNumber evidence="5">2.4.1.-</ecNumber>
    </recommendedName>
    <alternativeName>
        <fullName evidence="8">O-fucosyltransferase family protein</fullName>
    </alternativeName>
</protein>